<sequence length="216" mass="24070">MESQEPTESSQNGKQYIISEELISEGKWVKLEKTTYMDPTGKTRTWESVKRTTRKEQTADGVAVIPVLQRTLHYECIVLVKQFRPPMGGYCIEFPAGLIDDGETPEAAALRELEEETGYKGDVAECSPAVCMDPGLSNCTVHIVTVTINGDDAENARPKPKPEFVEVISLPKNDLLQRLDALVAEEHLTVDARVYSYALALKHANAKPFEVPFLKF</sequence>
<proteinExistence type="evidence at transcript level"/>
<keyword id="KW-0007">Acetylation</keyword>
<keyword id="KW-0378">Hydrolase</keyword>
<keyword id="KW-1017">Isopeptide bond</keyword>
<keyword id="KW-0460">Magnesium</keyword>
<keyword id="KW-0479">Metal-binding</keyword>
<keyword id="KW-0539">Nucleus</keyword>
<keyword id="KW-0597">Phosphoprotein</keyword>
<keyword id="KW-1185">Reference proteome</keyword>
<keyword id="KW-0694">RNA-binding</keyword>
<keyword id="KW-0808">Transferase</keyword>
<keyword id="KW-0832">Ubl conjugation</keyword>
<organism>
    <name type="scientific">Pongo abelii</name>
    <name type="common">Sumatran orangutan</name>
    <name type="synonym">Pongo pygmaeus abelii</name>
    <dbReference type="NCBI Taxonomy" id="9601"/>
    <lineage>
        <taxon>Eukaryota</taxon>
        <taxon>Metazoa</taxon>
        <taxon>Chordata</taxon>
        <taxon>Craniata</taxon>
        <taxon>Vertebrata</taxon>
        <taxon>Euteleostomi</taxon>
        <taxon>Mammalia</taxon>
        <taxon>Eutheria</taxon>
        <taxon>Euarchontoglires</taxon>
        <taxon>Primates</taxon>
        <taxon>Haplorrhini</taxon>
        <taxon>Catarrhini</taxon>
        <taxon>Hominidae</taxon>
        <taxon>Pongo</taxon>
    </lineage>
</organism>
<name>NUDT5_PONAB</name>
<evidence type="ECO:0000250" key="1">
    <source>
        <dbReference type="UniProtKB" id="Q9JKX6"/>
    </source>
</evidence>
<evidence type="ECO:0000250" key="2">
    <source>
        <dbReference type="UniProtKB" id="Q9UKK9"/>
    </source>
</evidence>
<evidence type="ECO:0000255" key="3">
    <source>
        <dbReference type="PROSITE-ProRule" id="PRU00794"/>
    </source>
</evidence>
<evidence type="ECO:0000305" key="4"/>
<reference key="1">
    <citation type="submission" date="2004-11" db="EMBL/GenBank/DDBJ databases">
        <authorList>
            <consortium name="The German cDNA consortium"/>
        </authorList>
    </citation>
    <scope>NUCLEOTIDE SEQUENCE [LARGE SCALE MRNA]</scope>
    <source>
        <tissue>Heart</tissue>
    </source>
</reference>
<reference key="2">
    <citation type="submission" date="2008-02" db="EMBL/GenBank/DDBJ databases">
        <title>A 6x draft sequence assembly of the Pongo pygmaeus abelii genome.</title>
        <authorList>
            <person name="Wilson R.K."/>
            <person name="Mardis E."/>
        </authorList>
    </citation>
    <scope>NUCLEOTIDE SEQUENCE [LARGE SCALE GENOMIC DNA]</scope>
</reference>
<protein>
    <recommendedName>
        <fullName evidence="2">ADP-sugar pyrophosphatase</fullName>
        <ecNumber evidence="2">3.6.1.13</ecNumber>
    </recommendedName>
    <alternativeName>
        <fullName evidence="2">8-oxo-dGDP phosphatase</fullName>
        <ecNumber evidence="2">3.6.1.58</ecNumber>
    </alternativeName>
    <alternativeName>
        <fullName evidence="2">Nuclear ATP-synthesis protein NUDIX5</fullName>
        <ecNumber evidence="2">2.7.7.96</ecNumber>
    </alternativeName>
    <alternativeName>
        <fullName evidence="4">Nucleoside diphosphate-linked moiety X motif 5</fullName>
        <shortName evidence="4">Nudix motif 5</shortName>
    </alternativeName>
</protein>
<comment type="function">
    <text evidence="1 2">Enzyme that can either act as an ADP-sugar pyrophosphatase in absence of diphosphate or catalyze the synthesis of ATP in presence of diphosphate. In absence of diphosphate, hydrolyzes with similar activities various modified nucleoside diphosphates such as ADP-ribose, ADP-mannose, ADP-glucose, 8-oxo-GDP and 8-oxo-dGDP. Can also hydrolyze other nucleotide sugars with low activity. In presence of diphosphate, mediates the synthesis of ATP in the nucleus by catalyzing the conversion of ADP-ribose to ATP and ribose 5-phosphate. Nuclear ATP synthesis takes place when dephosphorylated at Thr-45. Nuclear ATP generation is required for extensive chromatin remodeling events that are energy-consuming. Does not play a role in U8 snoRNA decapping activity. Binds U8 snoRNA.</text>
</comment>
<comment type="catalytic activity">
    <reaction evidence="2">
        <text>D-ribose 5-phosphate + ATP + H(+) = ADP-D-ribose + diphosphate</text>
        <dbReference type="Rhea" id="RHEA:50248"/>
        <dbReference type="ChEBI" id="CHEBI:15378"/>
        <dbReference type="ChEBI" id="CHEBI:30616"/>
        <dbReference type="ChEBI" id="CHEBI:33019"/>
        <dbReference type="ChEBI" id="CHEBI:57967"/>
        <dbReference type="ChEBI" id="CHEBI:78346"/>
        <dbReference type="EC" id="2.7.7.96"/>
    </reaction>
</comment>
<comment type="catalytic activity">
    <reaction evidence="2">
        <text>ADP-D-ribose + H2O = D-ribose 5-phosphate + AMP + 2 H(+)</text>
        <dbReference type="Rhea" id="RHEA:10412"/>
        <dbReference type="ChEBI" id="CHEBI:15377"/>
        <dbReference type="ChEBI" id="CHEBI:15378"/>
        <dbReference type="ChEBI" id="CHEBI:57967"/>
        <dbReference type="ChEBI" id="CHEBI:78346"/>
        <dbReference type="ChEBI" id="CHEBI:456215"/>
        <dbReference type="EC" id="3.6.1.13"/>
    </reaction>
</comment>
<comment type="catalytic activity">
    <reaction evidence="2">
        <text>8-oxo-dGDP + H2O = 8-oxo-dGMP + phosphate + H(+)</text>
        <dbReference type="Rhea" id="RHEA:32063"/>
        <dbReference type="ChEBI" id="CHEBI:15377"/>
        <dbReference type="ChEBI" id="CHEBI:15378"/>
        <dbReference type="ChEBI" id="CHEBI:43474"/>
        <dbReference type="ChEBI" id="CHEBI:63224"/>
        <dbReference type="ChEBI" id="CHEBI:63715"/>
        <dbReference type="EC" id="3.6.1.58"/>
    </reaction>
</comment>
<comment type="cofactor">
    <cofactor evidence="2">
        <name>Mg(2+)</name>
        <dbReference type="ChEBI" id="CHEBI:18420"/>
    </cofactor>
    <text evidence="2">Binds 3 Mg(2+) ions per subunit.</text>
</comment>
<comment type="subunit">
    <text evidence="2">Homodimer. Interacts with PARG.</text>
</comment>
<comment type="subcellular location">
    <subcellularLocation>
        <location evidence="2">Nucleus</location>
    </subcellularLocation>
</comment>
<comment type="PTM">
    <text evidence="2">Phosphorylation at Thr-45 is required for homodimer stability; dephosphorylation results in destabilization of the homodimer. Dephosphorylation at Thr-45 promotes the ATP-synthesis activity.</text>
</comment>
<comment type="similarity">
    <text evidence="4">Belongs to the Nudix hydrolase family.</text>
</comment>
<accession>Q5RCY2</accession>
<accession>H2N9S2</accession>
<gene>
    <name evidence="2" type="primary">NUDT5</name>
</gene>
<dbReference type="EC" id="3.6.1.13" evidence="2"/>
<dbReference type="EC" id="3.6.1.58" evidence="2"/>
<dbReference type="EC" id="2.7.7.96" evidence="2"/>
<dbReference type="EMBL" id="CR858136">
    <property type="protein sequence ID" value="CAH90375.1"/>
    <property type="molecule type" value="mRNA"/>
</dbReference>
<dbReference type="EMBL" id="ABGA01256085">
    <property type="status" value="NOT_ANNOTATED_CDS"/>
    <property type="molecule type" value="Genomic_DNA"/>
</dbReference>
<dbReference type="RefSeq" id="NP_001125182.1">
    <property type="nucleotide sequence ID" value="NM_001131710.1"/>
</dbReference>
<dbReference type="RefSeq" id="XP_063583138.1">
    <property type="nucleotide sequence ID" value="XM_063727068.1"/>
</dbReference>
<dbReference type="SMR" id="Q5RCY2"/>
<dbReference type="STRING" id="9601.ENSPPYP00000002427"/>
<dbReference type="Ensembl" id="ENSPPYT00000037059.1">
    <property type="protein sequence ID" value="ENSPPYP00000040737.1"/>
    <property type="gene ID" value="ENSPPYG00000002091.3"/>
</dbReference>
<dbReference type="GeneID" id="100172071"/>
<dbReference type="KEGG" id="pon:100172071"/>
<dbReference type="CTD" id="11164"/>
<dbReference type="eggNOG" id="KOG3041">
    <property type="taxonomic scope" value="Eukaryota"/>
</dbReference>
<dbReference type="GeneTree" id="ENSGT00940000154045"/>
<dbReference type="HOGENOM" id="CLU_062658_0_2_1"/>
<dbReference type="InParanoid" id="Q5RCY2"/>
<dbReference type="OrthoDB" id="10249920at2759"/>
<dbReference type="TreeFam" id="TF106347"/>
<dbReference type="Proteomes" id="UP000001595">
    <property type="component" value="Chromosome 10"/>
</dbReference>
<dbReference type="GO" id="GO:0005634">
    <property type="term" value="C:nucleus"/>
    <property type="evidence" value="ECO:0000250"/>
    <property type="project" value="UniProtKB"/>
</dbReference>
<dbReference type="GO" id="GO:0044715">
    <property type="term" value="F:8-oxo-dGDP phosphatase activity"/>
    <property type="evidence" value="ECO:0000250"/>
    <property type="project" value="UniProtKB"/>
</dbReference>
<dbReference type="GO" id="GO:0047631">
    <property type="term" value="F:ADP-ribose diphosphatase activity"/>
    <property type="evidence" value="ECO:0000250"/>
    <property type="project" value="UniProtKB"/>
</dbReference>
<dbReference type="GO" id="GO:0019144">
    <property type="term" value="F:ADP-sugar diphosphatase activity"/>
    <property type="evidence" value="ECO:0000250"/>
    <property type="project" value="UniProtKB"/>
</dbReference>
<dbReference type="GO" id="GO:0000287">
    <property type="term" value="F:magnesium ion binding"/>
    <property type="evidence" value="ECO:0000250"/>
    <property type="project" value="UniProtKB"/>
</dbReference>
<dbReference type="GO" id="GO:0016779">
    <property type="term" value="F:nucleotidyltransferase activity"/>
    <property type="evidence" value="ECO:0000250"/>
    <property type="project" value="UniProtKB"/>
</dbReference>
<dbReference type="GO" id="GO:0042803">
    <property type="term" value="F:protein homodimerization activity"/>
    <property type="evidence" value="ECO:0000250"/>
    <property type="project" value="UniProtKB"/>
</dbReference>
<dbReference type="GO" id="GO:0030515">
    <property type="term" value="F:snoRNA binding"/>
    <property type="evidence" value="ECO:0000250"/>
    <property type="project" value="UniProtKB"/>
</dbReference>
<dbReference type="GO" id="GO:0006338">
    <property type="term" value="P:chromatin remodeling"/>
    <property type="evidence" value="ECO:0000250"/>
    <property type="project" value="UniProtKB"/>
</dbReference>
<dbReference type="GO" id="GO:0019303">
    <property type="term" value="P:D-ribose catabolic process"/>
    <property type="evidence" value="ECO:0000250"/>
    <property type="project" value="UniProtKB"/>
</dbReference>
<dbReference type="GO" id="GO:0009191">
    <property type="term" value="P:ribonucleoside diphosphate catabolic process"/>
    <property type="evidence" value="ECO:0000250"/>
    <property type="project" value="UniProtKB"/>
</dbReference>
<dbReference type="GO" id="GO:0019693">
    <property type="term" value="P:ribose phosphate metabolic process"/>
    <property type="evidence" value="ECO:0007669"/>
    <property type="project" value="TreeGrafter"/>
</dbReference>
<dbReference type="CDD" id="cd18888">
    <property type="entry name" value="NUDIX_ADPRase_Nudt5"/>
    <property type="match status" value="1"/>
</dbReference>
<dbReference type="FunFam" id="3.90.79.10:FF:000016">
    <property type="entry name" value="ADP-sugar pyrophosphatase isoform X1"/>
    <property type="match status" value="1"/>
</dbReference>
<dbReference type="Gene3D" id="3.90.79.10">
    <property type="entry name" value="Nucleoside Triphosphate Pyrophosphohydrolase"/>
    <property type="match status" value="1"/>
</dbReference>
<dbReference type="InterPro" id="IPR020476">
    <property type="entry name" value="Nudix_hydrolase"/>
</dbReference>
<dbReference type="InterPro" id="IPR015797">
    <property type="entry name" value="NUDIX_hydrolase-like_dom_sf"/>
</dbReference>
<dbReference type="InterPro" id="IPR020084">
    <property type="entry name" value="NUDIX_hydrolase_CS"/>
</dbReference>
<dbReference type="InterPro" id="IPR000086">
    <property type="entry name" value="NUDIX_hydrolase_dom"/>
</dbReference>
<dbReference type="PANTHER" id="PTHR11839:SF1">
    <property type="entry name" value="ADP-SUGAR PYROPHOSPHATASE"/>
    <property type="match status" value="1"/>
</dbReference>
<dbReference type="PANTHER" id="PTHR11839">
    <property type="entry name" value="UDP/ADP-SUGAR PYROPHOSPHATASE"/>
    <property type="match status" value="1"/>
</dbReference>
<dbReference type="Pfam" id="PF00293">
    <property type="entry name" value="NUDIX"/>
    <property type="match status" value="1"/>
</dbReference>
<dbReference type="PRINTS" id="PR00502">
    <property type="entry name" value="NUDIXFAMILY"/>
</dbReference>
<dbReference type="SUPFAM" id="SSF55811">
    <property type="entry name" value="Nudix"/>
    <property type="match status" value="1"/>
</dbReference>
<dbReference type="PROSITE" id="PS51462">
    <property type="entry name" value="NUDIX"/>
    <property type="match status" value="1"/>
</dbReference>
<dbReference type="PROSITE" id="PS00893">
    <property type="entry name" value="NUDIX_BOX"/>
    <property type="match status" value="1"/>
</dbReference>
<feature type="chain" id="PRO_0000250702" description="ADP-sugar pyrophosphatase">
    <location>
        <begin position="1"/>
        <end position="216"/>
    </location>
</feature>
<feature type="domain" description="Nudix hydrolase" evidence="3">
    <location>
        <begin position="57"/>
        <end position="194"/>
    </location>
</feature>
<feature type="short sequence motif" description="Nudix box">
    <location>
        <begin position="97"/>
        <end position="118"/>
    </location>
</feature>
<feature type="binding site" description="in other chain" evidence="2">
    <location>
        <position position="28"/>
    </location>
    <ligand>
        <name>substrate</name>
        <note>ligand shared between dimeric partners</note>
    </ligand>
</feature>
<feature type="binding site" evidence="2">
    <location>
        <begin position="46"/>
        <end position="47"/>
    </location>
    <ligand>
        <name>substrate</name>
        <note>ligand shared between dimeric partners</note>
    </ligand>
</feature>
<feature type="binding site" evidence="2">
    <location>
        <position position="51"/>
    </location>
    <ligand>
        <name>substrate</name>
        <note>ligand shared between dimeric partners</note>
    </ligand>
</feature>
<feature type="binding site" description="in other chain" evidence="2">
    <location>
        <position position="84"/>
    </location>
    <ligand>
        <name>substrate</name>
        <note>ligand shared between dimeric partners</note>
    </ligand>
</feature>
<feature type="binding site" evidence="2">
    <location>
        <position position="96"/>
    </location>
    <ligand>
        <name>Mg(2+)</name>
        <dbReference type="ChEBI" id="CHEBI:18420"/>
        <label>1</label>
    </ligand>
</feature>
<feature type="binding site" description="in other chain" evidence="2">
    <location>
        <position position="98"/>
    </location>
    <ligand>
        <name>substrate</name>
        <note>ligand shared between dimeric partners</note>
    </ligand>
</feature>
<feature type="binding site" evidence="2">
    <location>
        <position position="112"/>
    </location>
    <ligand>
        <name>Mg(2+)</name>
        <dbReference type="ChEBI" id="CHEBI:18420"/>
        <label>2</label>
    </ligand>
</feature>
<feature type="binding site" evidence="2">
    <location>
        <position position="112"/>
    </location>
    <ligand>
        <name>Mg(2+)</name>
        <dbReference type="ChEBI" id="CHEBI:18420"/>
        <label>3</label>
    </ligand>
</feature>
<feature type="binding site" evidence="2">
    <location>
        <position position="116"/>
    </location>
    <ligand>
        <name>Mg(2+)</name>
        <dbReference type="ChEBI" id="CHEBI:18420"/>
        <label>1</label>
    </ligand>
</feature>
<feature type="binding site" evidence="2">
    <location>
        <position position="116"/>
    </location>
    <ligand>
        <name>Mg(2+)</name>
        <dbReference type="ChEBI" id="CHEBI:18420"/>
        <label>3</label>
    </ligand>
</feature>
<feature type="binding site" description="in other chain" evidence="2">
    <location>
        <position position="133"/>
    </location>
    <ligand>
        <name>substrate</name>
        <note>ligand shared between dimeric partners</note>
    </ligand>
</feature>
<feature type="binding site" evidence="2">
    <location>
        <position position="163"/>
    </location>
    <ligand>
        <name>Mg(2+)</name>
        <dbReference type="ChEBI" id="CHEBI:18420"/>
        <label>3</label>
    </ligand>
</feature>
<feature type="modified residue" description="N-acetylmethionine" evidence="2">
    <location>
        <position position="1"/>
    </location>
</feature>
<feature type="modified residue" description="Phosphoserine" evidence="2">
    <location>
        <position position="3"/>
    </location>
</feature>
<feature type="modified residue" description="Phosphoserine" evidence="2">
    <location>
        <position position="10"/>
    </location>
</feature>
<feature type="modified residue" description="Phosphothreonine" evidence="2">
    <location>
        <position position="45"/>
    </location>
</feature>
<feature type="modified residue" description="Phosphotyrosine" evidence="2">
    <location>
        <position position="74"/>
    </location>
</feature>
<feature type="modified residue" description="N6-acetyllysine" evidence="2">
    <location>
        <position position="207"/>
    </location>
</feature>
<feature type="modified residue" description="N6-acetyllysine" evidence="2">
    <location>
        <position position="215"/>
    </location>
</feature>
<feature type="cross-link" description="Glycyl lysine isopeptide (Lys-Gly) (interchain with G-Cter in SUMO2)" evidence="2">
    <location>
        <position position="42"/>
    </location>
</feature>
<feature type="sequence conflict" description="In Ref. 2; ABGA01256085." evidence="4" ref="2">
    <original>P</original>
    <variation>PGDG</variation>
    <location>
        <position position="162"/>
    </location>
</feature>